<name>HFLD_HAHCH</name>
<feature type="chain" id="PRO_1000045424" description="High frequency lysogenization protein HflD homolog">
    <location>
        <begin position="1"/>
        <end position="205"/>
    </location>
</feature>
<comment type="subcellular location">
    <subcellularLocation>
        <location>Cytoplasm</location>
    </subcellularLocation>
    <subcellularLocation>
        <location evidence="1">Cell inner membrane</location>
        <topology evidence="1">Peripheral membrane protein</topology>
        <orientation evidence="1">Cytoplasmic side</orientation>
    </subcellularLocation>
</comment>
<comment type="similarity">
    <text evidence="1">Belongs to the HflD family.</text>
</comment>
<protein>
    <recommendedName>
        <fullName evidence="1">High frequency lysogenization protein HflD homolog</fullName>
    </recommendedName>
</protein>
<reference key="1">
    <citation type="journal article" date="2005" name="Nucleic Acids Res.">
        <title>Genomic blueprint of Hahella chejuensis, a marine microbe producing an algicidal agent.</title>
        <authorList>
            <person name="Jeong H."/>
            <person name="Yim J.H."/>
            <person name="Lee C."/>
            <person name="Choi S.-H."/>
            <person name="Park Y.K."/>
            <person name="Yoon S.H."/>
            <person name="Hur C.-G."/>
            <person name="Kang H.-Y."/>
            <person name="Kim D."/>
            <person name="Lee H.H."/>
            <person name="Park K.H."/>
            <person name="Park S.-H."/>
            <person name="Park H.-S."/>
            <person name="Lee H.K."/>
            <person name="Oh T.K."/>
            <person name="Kim J.F."/>
        </authorList>
    </citation>
    <scope>NUCLEOTIDE SEQUENCE [LARGE SCALE GENOMIC DNA]</scope>
    <source>
        <strain>KCTC 2396</strain>
    </source>
</reference>
<keyword id="KW-0997">Cell inner membrane</keyword>
<keyword id="KW-1003">Cell membrane</keyword>
<keyword id="KW-0963">Cytoplasm</keyword>
<keyword id="KW-0472">Membrane</keyword>
<keyword id="KW-1185">Reference proteome</keyword>
<proteinExistence type="inferred from homology"/>
<dbReference type="EMBL" id="CP000155">
    <property type="protein sequence ID" value="ABC29155.1"/>
    <property type="molecule type" value="Genomic_DNA"/>
</dbReference>
<dbReference type="RefSeq" id="WP_011396224.1">
    <property type="nucleotide sequence ID" value="NC_007645.1"/>
</dbReference>
<dbReference type="SMR" id="Q2SJL9"/>
<dbReference type="STRING" id="349521.HCH_02332"/>
<dbReference type="KEGG" id="hch:HCH_02332"/>
<dbReference type="eggNOG" id="COG2915">
    <property type="taxonomic scope" value="Bacteria"/>
</dbReference>
<dbReference type="HOGENOM" id="CLU_098920_0_0_6"/>
<dbReference type="OrthoDB" id="9788031at2"/>
<dbReference type="Proteomes" id="UP000000238">
    <property type="component" value="Chromosome"/>
</dbReference>
<dbReference type="GO" id="GO:0005737">
    <property type="term" value="C:cytoplasm"/>
    <property type="evidence" value="ECO:0007669"/>
    <property type="project" value="UniProtKB-SubCell"/>
</dbReference>
<dbReference type="GO" id="GO:0005886">
    <property type="term" value="C:plasma membrane"/>
    <property type="evidence" value="ECO:0007669"/>
    <property type="project" value="UniProtKB-SubCell"/>
</dbReference>
<dbReference type="Gene3D" id="1.10.3890.10">
    <property type="entry name" value="HflD-like"/>
    <property type="match status" value="1"/>
</dbReference>
<dbReference type="HAMAP" id="MF_00695">
    <property type="entry name" value="HflD_protein"/>
    <property type="match status" value="1"/>
</dbReference>
<dbReference type="InterPro" id="IPR007451">
    <property type="entry name" value="HflD"/>
</dbReference>
<dbReference type="InterPro" id="IPR035932">
    <property type="entry name" value="HflD-like_sf"/>
</dbReference>
<dbReference type="NCBIfam" id="NF001246">
    <property type="entry name" value="PRK00218.1-2"/>
    <property type="match status" value="1"/>
</dbReference>
<dbReference type="PANTHER" id="PTHR38100">
    <property type="entry name" value="HIGH FREQUENCY LYSOGENIZATION PROTEIN HFLD"/>
    <property type="match status" value="1"/>
</dbReference>
<dbReference type="PANTHER" id="PTHR38100:SF1">
    <property type="entry name" value="HIGH FREQUENCY LYSOGENIZATION PROTEIN HFLD"/>
    <property type="match status" value="1"/>
</dbReference>
<dbReference type="Pfam" id="PF04356">
    <property type="entry name" value="DUF489"/>
    <property type="match status" value="1"/>
</dbReference>
<dbReference type="SUPFAM" id="SSF101322">
    <property type="entry name" value="YcfC-like"/>
    <property type="match status" value="1"/>
</dbReference>
<accession>Q2SJL9</accession>
<gene>
    <name evidence="1" type="primary">hflD</name>
    <name type="ordered locus">HCH_02332</name>
</gene>
<evidence type="ECO:0000255" key="1">
    <source>
        <dbReference type="HAMAP-Rule" id="MF_00695"/>
    </source>
</evidence>
<sequence length="205" mass="23104">MSYNLENQVIALAGVFQSAALVDQLAKQGTVAPTSYECSLKSLLKVDATSTLDVYGDIYGLQLGLKELIAVLERKQDRKKVDVVRYALTLLYLEGKVNKRGDMLDVMSQRIAQINTQTLHFEPTHTNIISAFASLYSDTISTFPQRIQVTGDPRFLRVDENADKIRALLLAGIRAAVLWRQVGGRRWKLFFMRKKILQIANGMLR</sequence>
<organism>
    <name type="scientific">Hahella chejuensis (strain KCTC 2396)</name>
    <dbReference type="NCBI Taxonomy" id="349521"/>
    <lineage>
        <taxon>Bacteria</taxon>
        <taxon>Pseudomonadati</taxon>
        <taxon>Pseudomonadota</taxon>
        <taxon>Gammaproteobacteria</taxon>
        <taxon>Oceanospirillales</taxon>
        <taxon>Hahellaceae</taxon>
        <taxon>Hahella</taxon>
    </lineage>
</organism>